<keyword id="KW-0963">Cytoplasm</keyword>
<keyword id="KW-0489">Methyltransferase</keyword>
<keyword id="KW-1185">Reference proteome</keyword>
<keyword id="KW-0698">rRNA processing</keyword>
<keyword id="KW-0949">S-adenosyl-L-methionine</keyword>
<keyword id="KW-0808">Transferase</keyword>
<protein>
    <recommendedName>
        <fullName evidence="1">Ribosomal RNA small subunit methyltransferase H</fullName>
        <ecNumber evidence="1">2.1.1.199</ecNumber>
    </recommendedName>
    <alternativeName>
        <fullName evidence="1">16S rRNA m(4)C1402 methyltransferase</fullName>
    </alternativeName>
    <alternativeName>
        <fullName evidence="1">rRNA (cytosine-N(4)-)-methyltransferase RsmH</fullName>
    </alternativeName>
</protein>
<comment type="function">
    <text evidence="1">Specifically methylates the N4 position of cytidine in position 1402 (C1402) of 16S rRNA.</text>
</comment>
<comment type="catalytic activity">
    <reaction evidence="1">
        <text>cytidine(1402) in 16S rRNA + S-adenosyl-L-methionine = N(4)-methylcytidine(1402) in 16S rRNA + S-adenosyl-L-homocysteine + H(+)</text>
        <dbReference type="Rhea" id="RHEA:42928"/>
        <dbReference type="Rhea" id="RHEA-COMP:10286"/>
        <dbReference type="Rhea" id="RHEA-COMP:10287"/>
        <dbReference type="ChEBI" id="CHEBI:15378"/>
        <dbReference type="ChEBI" id="CHEBI:57856"/>
        <dbReference type="ChEBI" id="CHEBI:59789"/>
        <dbReference type="ChEBI" id="CHEBI:74506"/>
        <dbReference type="ChEBI" id="CHEBI:82748"/>
        <dbReference type="EC" id="2.1.1.199"/>
    </reaction>
</comment>
<comment type="subcellular location">
    <subcellularLocation>
        <location evidence="1">Cytoplasm</location>
    </subcellularLocation>
</comment>
<comment type="similarity">
    <text evidence="1">Belongs to the methyltransferase superfamily. RsmH family.</text>
</comment>
<proteinExistence type="inferred from homology"/>
<accession>Q9PPL4</accession>
<accession>Q0PAI6</accession>
<feature type="chain" id="PRO_0000108598" description="Ribosomal RNA small subunit methyltransferase H">
    <location>
        <begin position="1"/>
        <end position="312"/>
    </location>
</feature>
<feature type="binding site" evidence="1">
    <location>
        <begin position="35"/>
        <end position="37"/>
    </location>
    <ligand>
        <name>S-adenosyl-L-methionine</name>
        <dbReference type="ChEBI" id="CHEBI:59789"/>
    </ligand>
</feature>
<feature type="binding site" evidence="1">
    <location>
        <position position="54"/>
    </location>
    <ligand>
        <name>S-adenosyl-L-methionine</name>
        <dbReference type="ChEBI" id="CHEBI:59789"/>
    </ligand>
</feature>
<feature type="binding site" evidence="1">
    <location>
        <position position="81"/>
    </location>
    <ligand>
        <name>S-adenosyl-L-methionine</name>
        <dbReference type="ChEBI" id="CHEBI:59789"/>
    </ligand>
</feature>
<feature type="binding site" evidence="1">
    <location>
        <position position="100"/>
    </location>
    <ligand>
        <name>S-adenosyl-L-methionine</name>
        <dbReference type="ChEBI" id="CHEBI:59789"/>
    </ligand>
</feature>
<feature type="binding site" evidence="1">
    <location>
        <position position="107"/>
    </location>
    <ligand>
        <name>S-adenosyl-L-methionine</name>
        <dbReference type="ChEBI" id="CHEBI:59789"/>
    </ligand>
</feature>
<evidence type="ECO:0000255" key="1">
    <source>
        <dbReference type="HAMAP-Rule" id="MF_01007"/>
    </source>
</evidence>
<reference key="1">
    <citation type="journal article" date="2000" name="Nature">
        <title>The genome sequence of the food-borne pathogen Campylobacter jejuni reveals hypervariable sequences.</title>
        <authorList>
            <person name="Parkhill J."/>
            <person name="Wren B.W."/>
            <person name="Mungall K.L."/>
            <person name="Ketley J.M."/>
            <person name="Churcher C.M."/>
            <person name="Basham D."/>
            <person name="Chillingworth T."/>
            <person name="Davies R.M."/>
            <person name="Feltwell T."/>
            <person name="Holroyd S."/>
            <person name="Jagels K."/>
            <person name="Karlyshev A.V."/>
            <person name="Moule S."/>
            <person name="Pallen M.J."/>
            <person name="Penn C.W."/>
            <person name="Quail M.A."/>
            <person name="Rajandream M.A."/>
            <person name="Rutherford K.M."/>
            <person name="van Vliet A.H.M."/>
            <person name="Whitehead S."/>
            <person name="Barrell B.G."/>
        </authorList>
    </citation>
    <scope>NUCLEOTIDE SEQUENCE [LARGE SCALE GENOMIC DNA]</scope>
    <source>
        <strain>ATCC 700819 / NCTC 11168</strain>
    </source>
</reference>
<dbReference type="EC" id="2.1.1.199" evidence="1"/>
<dbReference type="EMBL" id="AL111168">
    <property type="protein sequence ID" value="CAL34830.1"/>
    <property type="molecule type" value="Genomic_DNA"/>
</dbReference>
<dbReference type="PIR" id="H81339">
    <property type="entry name" value="H81339"/>
</dbReference>
<dbReference type="RefSeq" id="WP_010891880.1">
    <property type="nucleotide sequence ID" value="NZ_SZUC01000002.1"/>
</dbReference>
<dbReference type="RefSeq" id="YP_002344111.1">
    <property type="nucleotide sequence ID" value="NC_002163.1"/>
</dbReference>
<dbReference type="SMR" id="Q9PPL4"/>
<dbReference type="IntAct" id="Q9PPL4">
    <property type="interactions" value="20"/>
</dbReference>
<dbReference type="STRING" id="192222.Cj0693c"/>
<dbReference type="PaxDb" id="192222-Cj0693c"/>
<dbReference type="EnsemblBacteria" id="CAL34830">
    <property type="protein sequence ID" value="CAL34830"/>
    <property type="gene ID" value="Cj0693c"/>
</dbReference>
<dbReference type="GeneID" id="905012"/>
<dbReference type="KEGG" id="cje:Cj0693c"/>
<dbReference type="PATRIC" id="fig|192222.6.peg.685"/>
<dbReference type="eggNOG" id="COG0275">
    <property type="taxonomic scope" value="Bacteria"/>
</dbReference>
<dbReference type="HOGENOM" id="CLU_038422_3_0_7"/>
<dbReference type="OrthoDB" id="9806637at2"/>
<dbReference type="Proteomes" id="UP000000799">
    <property type="component" value="Chromosome"/>
</dbReference>
<dbReference type="GO" id="GO:0005737">
    <property type="term" value="C:cytoplasm"/>
    <property type="evidence" value="ECO:0007669"/>
    <property type="project" value="UniProtKB-SubCell"/>
</dbReference>
<dbReference type="GO" id="GO:0071424">
    <property type="term" value="F:rRNA (cytosine-N4-)-methyltransferase activity"/>
    <property type="evidence" value="ECO:0007669"/>
    <property type="project" value="UniProtKB-UniRule"/>
</dbReference>
<dbReference type="GO" id="GO:0070475">
    <property type="term" value="P:rRNA base methylation"/>
    <property type="evidence" value="ECO:0007669"/>
    <property type="project" value="UniProtKB-UniRule"/>
</dbReference>
<dbReference type="Gene3D" id="1.10.150.170">
    <property type="entry name" value="Putative methyltransferase TM0872, insert domain"/>
    <property type="match status" value="1"/>
</dbReference>
<dbReference type="Gene3D" id="3.40.50.150">
    <property type="entry name" value="Vaccinia Virus protein VP39"/>
    <property type="match status" value="1"/>
</dbReference>
<dbReference type="HAMAP" id="MF_01007">
    <property type="entry name" value="16SrRNA_methyltr_H"/>
    <property type="match status" value="1"/>
</dbReference>
<dbReference type="InterPro" id="IPR002903">
    <property type="entry name" value="RsmH"/>
</dbReference>
<dbReference type="InterPro" id="IPR023397">
    <property type="entry name" value="SAM-dep_MeTrfase_MraW_recog"/>
</dbReference>
<dbReference type="InterPro" id="IPR029063">
    <property type="entry name" value="SAM-dependent_MTases_sf"/>
</dbReference>
<dbReference type="NCBIfam" id="TIGR00006">
    <property type="entry name" value="16S rRNA (cytosine(1402)-N(4))-methyltransferase RsmH"/>
    <property type="match status" value="1"/>
</dbReference>
<dbReference type="PANTHER" id="PTHR11265:SF0">
    <property type="entry name" value="12S RRNA N4-METHYLCYTIDINE METHYLTRANSFERASE"/>
    <property type="match status" value="1"/>
</dbReference>
<dbReference type="PANTHER" id="PTHR11265">
    <property type="entry name" value="S-ADENOSYL-METHYLTRANSFERASE MRAW"/>
    <property type="match status" value="1"/>
</dbReference>
<dbReference type="Pfam" id="PF01795">
    <property type="entry name" value="Methyltransf_5"/>
    <property type="match status" value="1"/>
</dbReference>
<dbReference type="PIRSF" id="PIRSF004486">
    <property type="entry name" value="MraW"/>
    <property type="match status" value="1"/>
</dbReference>
<dbReference type="SUPFAM" id="SSF81799">
    <property type="entry name" value="Putative methyltransferase TM0872, insert domain"/>
    <property type="match status" value="1"/>
</dbReference>
<dbReference type="SUPFAM" id="SSF53335">
    <property type="entry name" value="S-adenosyl-L-methionine-dependent methyltransferases"/>
    <property type="match status" value="1"/>
</dbReference>
<name>RSMH_CAMJE</name>
<gene>
    <name evidence="1" type="primary">rsmH</name>
    <name type="synonym">mraW</name>
    <name type="ordered locus">Cj0693c</name>
</gene>
<organism>
    <name type="scientific">Campylobacter jejuni subsp. jejuni serotype O:2 (strain ATCC 700819 / NCTC 11168)</name>
    <dbReference type="NCBI Taxonomy" id="192222"/>
    <lineage>
        <taxon>Bacteria</taxon>
        <taxon>Pseudomonadati</taxon>
        <taxon>Campylobacterota</taxon>
        <taxon>Epsilonproteobacteria</taxon>
        <taxon>Campylobacterales</taxon>
        <taxon>Campylobacteraceae</taxon>
        <taxon>Campylobacter</taxon>
    </lineage>
</organism>
<sequence>MILEIPHIPVLLNEVQEIFKNLKTGYFLDCTLGFGGHSEALLKNHPDLKFIACDQDQQALKFSKKRLKDFRNRITFMQSNFSEVLEKISHKEELRGILADIGVSSFQLDNNERGFSVNSDFLDMRMNQNSKISAYEIINTYTKEQLTSIFKDYGELHDAHFIAEKICLERSKNLIKSAKELYQIIGKGKQNHRKISKATLAFQAIRIEVNQELKVLKDFLEHLENLKPKNCILAIISFHSLEDRIVKQFFKKWSKNCICNEKIMRCECGNNHSLGQIITKKAISASKEELLKNSRSSCAKMRAFYFNNLDNK</sequence>